<feature type="chain" id="PRO_0000296827" description="DNA-directed RNA polymerase subunit alpha">
    <location>
        <begin position="1"/>
        <end position="325"/>
    </location>
</feature>
<feature type="region of interest" description="Alpha N-terminal domain (alpha-NTD)" evidence="1">
    <location>
        <begin position="1"/>
        <end position="238"/>
    </location>
</feature>
<feature type="region of interest" description="Alpha C-terminal domain (alpha-CTD)" evidence="1">
    <location>
        <begin position="254"/>
        <end position="325"/>
    </location>
</feature>
<comment type="function">
    <text evidence="1">DNA-dependent RNA polymerase catalyzes the transcription of DNA into RNA using the four ribonucleoside triphosphates as substrates.</text>
</comment>
<comment type="catalytic activity">
    <reaction evidence="1">
        <text>RNA(n) + a ribonucleoside 5'-triphosphate = RNA(n+1) + diphosphate</text>
        <dbReference type="Rhea" id="RHEA:21248"/>
        <dbReference type="Rhea" id="RHEA-COMP:14527"/>
        <dbReference type="Rhea" id="RHEA-COMP:17342"/>
        <dbReference type="ChEBI" id="CHEBI:33019"/>
        <dbReference type="ChEBI" id="CHEBI:61557"/>
        <dbReference type="ChEBI" id="CHEBI:140395"/>
        <dbReference type="EC" id="2.7.7.6"/>
    </reaction>
</comment>
<comment type="subunit">
    <text evidence="1">Homodimer. The RNAP catalytic core consists of 2 alpha, 1 beta, 1 beta' and 1 omega subunit. When a sigma factor is associated with the core the holoenzyme is formed, which can initiate transcription.</text>
</comment>
<comment type="domain">
    <text evidence="1">The N-terminal domain is essential for RNAP assembly and basal transcription, whereas the C-terminal domain is involved in interaction with transcriptional regulators and with upstream promoter elements.</text>
</comment>
<comment type="similarity">
    <text evidence="1">Belongs to the RNA polymerase alpha chain family.</text>
</comment>
<proteinExistence type="inferred from homology"/>
<dbReference type="EC" id="2.7.7.6" evidence="1"/>
<dbReference type="EMBL" id="CP000348">
    <property type="protein sequence ID" value="ABJ78038.1"/>
    <property type="molecule type" value="Genomic_DNA"/>
</dbReference>
<dbReference type="EMBL" id="CP000348">
    <property type="protein sequence ID" value="ABJ78078.1"/>
    <property type="molecule type" value="Genomic_DNA"/>
</dbReference>
<dbReference type="RefSeq" id="WP_002722915.1">
    <property type="nucleotide sequence ID" value="NC_008508.1"/>
</dbReference>
<dbReference type="SMR" id="Q055B7"/>
<dbReference type="KEGG" id="lbl:LBL_0440"/>
<dbReference type="KEGG" id="lbl:LBL_0480"/>
<dbReference type="HOGENOM" id="CLU_053084_0_1_12"/>
<dbReference type="GO" id="GO:0005737">
    <property type="term" value="C:cytoplasm"/>
    <property type="evidence" value="ECO:0007669"/>
    <property type="project" value="UniProtKB-ARBA"/>
</dbReference>
<dbReference type="GO" id="GO:0000428">
    <property type="term" value="C:DNA-directed RNA polymerase complex"/>
    <property type="evidence" value="ECO:0007669"/>
    <property type="project" value="UniProtKB-KW"/>
</dbReference>
<dbReference type="GO" id="GO:0003677">
    <property type="term" value="F:DNA binding"/>
    <property type="evidence" value="ECO:0007669"/>
    <property type="project" value="UniProtKB-UniRule"/>
</dbReference>
<dbReference type="GO" id="GO:0003899">
    <property type="term" value="F:DNA-directed RNA polymerase activity"/>
    <property type="evidence" value="ECO:0007669"/>
    <property type="project" value="UniProtKB-UniRule"/>
</dbReference>
<dbReference type="GO" id="GO:0046983">
    <property type="term" value="F:protein dimerization activity"/>
    <property type="evidence" value="ECO:0007669"/>
    <property type="project" value="InterPro"/>
</dbReference>
<dbReference type="GO" id="GO:0006351">
    <property type="term" value="P:DNA-templated transcription"/>
    <property type="evidence" value="ECO:0007669"/>
    <property type="project" value="UniProtKB-UniRule"/>
</dbReference>
<dbReference type="CDD" id="cd06928">
    <property type="entry name" value="RNAP_alpha_NTD"/>
    <property type="match status" value="1"/>
</dbReference>
<dbReference type="FunFam" id="1.10.150.20:FF:000047">
    <property type="entry name" value="DNA-directed RNA polymerase subunit alpha"/>
    <property type="match status" value="1"/>
</dbReference>
<dbReference type="FunFam" id="2.170.120.12:FF:000001">
    <property type="entry name" value="DNA-directed RNA polymerase subunit alpha"/>
    <property type="match status" value="1"/>
</dbReference>
<dbReference type="Gene3D" id="1.10.150.20">
    <property type="entry name" value="5' to 3' exonuclease, C-terminal subdomain"/>
    <property type="match status" value="1"/>
</dbReference>
<dbReference type="Gene3D" id="2.170.120.12">
    <property type="entry name" value="DNA-directed RNA polymerase, insert domain"/>
    <property type="match status" value="1"/>
</dbReference>
<dbReference type="Gene3D" id="3.30.1360.10">
    <property type="entry name" value="RNA polymerase, RBP11-like subunit"/>
    <property type="match status" value="1"/>
</dbReference>
<dbReference type="HAMAP" id="MF_00059">
    <property type="entry name" value="RNApol_bact_RpoA"/>
    <property type="match status" value="1"/>
</dbReference>
<dbReference type="InterPro" id="IPR011262">
    <property type="entry name" value="DNA-dir_RNA_pol_insert"/>
</dbReference>
<dbReference type="InterPro" id="IPR011263">
    <property type="entry name" value="DNA-dir_RNA_pol_RpoA/D/Rpb3"/>
</dbReference>
<dbReference type="InterPro" id="IPR011773">
    <property type="entry name" value="DNA-dir_RpoA"/>
</dbReference>
<dbReference type="InterPro" id="IPR036603">
    <property type="entry name" value="RBP11-like"/>
</dbReference>
<dbReference type="InterPro" id="IPR011260">
    <property type="entry name" value="RNAP_asu_C"/>
</dbReference>
<dbReference type="InterPro" id="IPR036643">
    <property type="entry name" value="RNApol_insert_sf"/>
</dbReference>
<dbReference type="NCBIfam" id="NF003513">
    <property type="entry name" value="PRK05182.1-2"/>
    <property type="match status" value="1"/>
</dbReference>
<dbReference type="NCBIfam" id="NF003519">
    <property type="entry name" value="PRK05182.2-5"/>
    <property type="match status" value="1"/>
</dbReference>
<dbReference type="NCBIfam" id="TIGR02027">
    <property type="entry name" value="rpoA"/>
    <property type="match status" value="1"/>
</dbReference>
<dbReference type="Pfam" id="PF01000">
    <property type="entry name" value="RNA_pol_A_bac"/>
    <property type="match status" value="1"/>
</dbReference>
<dbReference type="Pfam" id="PF03118">
    <property type="entry name" value="RNA_pol_A_CTD"/>
    <property type="match status" value="1"/>
</dbReference>
<dbReference type="Pfam" id="PF01193">
    <property type="entry name" value="RNA_pol_L"/>
    <property type="match status" value="1"/>
</dbReference>
<dbReference type="SMART" id="SM00662">
    <property type="entry name" value="RPOLD"/>
    <property type="match status" value="1"/>
</dbReference>
<dbReference type="SUPFAM" id="SSF47789">
    <property type="entry name" value="C-terminal domain of RNA polymerase alpha subunit"/>
    <property type="match status" value="1"/>
</dbReference>
<dbReference type="SUPFAM" id="SSF56553">
    <property type="entry name" value="Insert subdomain of RNA polymerase alpha subunit"/>
    <property type="match status" value="1"/>
</dbReference>
<dbReference type="SUPFAM" id="SSF55257">
    <property type="entry name" value="RBP11-like subunits of RNA polymerase"/>
    <property type="match status" value="1"/>
</dbReference>
<reference key="1">
    <citation type="journal article" date="2006" name="Proc. Natl. Acad. Sci. U.S.A.">
        <title>Genome reduction in Leptospira borgpetersenii reflects limited transmission potential.</title>
        <authorList>
            <person name="Bulach D.M."/>
            <person name="Zuerner R.L."/>
            <person name="Wilson P."/>
            <person name="Seemann T."/>
            <person name="McGrath A."/>
            <person name="Cullen P.A."/>
            <person name="Davis J."/>
            <person name="Johnson M."/>
            <person name="Kuczek E."/>
            <person name="Alt D.P."/>
            <person name="Peterson-Burch B."/>
            <person name="Coppel R.L."/>
            <person name="Rood J.I."/>
            <person name="Davies J.K."/>
            <person name="Adler B."/>
        </authorList>
    </citation>
    <scope>NUCLEOTIDE SEQUENCE [LARGE SCALE GENOMIC DNA]</scope>
    <source>
        <strain>L550</strain>
    </source>
</reference>
<organism>
    <name type="scientific">Leptospira borgpetersenii serovar Hardjo-bovis (strain L550)</name>
    <dbReference type="NCBI Taxonomy" id="355276"/>
    <lineage>
        <taxon>Bacteria</taxon>
        <taxon>Pseudomonadati</taxon>
        <taxon>Spirochaetota</taxon>
        <taxon>Spirochaetia</taxon>
        <taxon>Leptospirales</taxon>
        <taxon>Leptospiraceae</taxon>
        <taxon>Leptospira</taxon>
    </lineage>
</organism>
<protein>
    <recommendedName>
        <fullName evidence="1">DNA-directed RNA polymerase subunit alpha</fullName>
        <shortName evidence="1">RNAP subunit alpha</shortName>
        <ecNumber evidence="1">2.7.7.6</ecNumber>
    </recommendedName>
    <alternativeName>
        <fullName evidence="1">RNA polymerase subunit alpha</fullName>
    </alternativeName>
    <alternativeName>
        <fullName evidence="1">Transcriptase subunit alpha</fullName>
    </alternativeName>
</protein>
<keyword id="KW-0240">DNA-directed RNA polymerase</keyword>
<keyword id="KW-0548">Nucleotidyltransferase</keyword>
<keyword id="KW-0804">Transcription</keyword>
<keyword id="KW-0808">Transferase</keyword>
<accession>Q055B7</accession>
<name>RPOA_LEPBL</name>
<gene>
    <name evidence="1" type="primary">rpoA1</name>
    <name type="ordered locus">LBL_0440</name>
</gene>
<gene>
    <name evidence="1" type="primary">rpoA2</name>
    <name type="ordered locus">LBL_0480</name>
</gene>
<evidence type="ECO:0000255" key="1">
    <source>
        <dbReference type="HAMAP-Rule" id="MF_00059"/>
    </source>
</evidence>
<sequence length="325" mass="36618">MSLKSLLKGFKRPKKIEFNTEASTPNYGKFVAEPFERGFATTIGNSLRRTLMSSIEGAAISAIRIEGVNHEFSFIEGVAEDVTRIILNLKQVRIKYEPEEKDQSKIIHLELKGAGYFRAGDLAVDSSIEIMNPDLHIATLNEDANLVMDLEIQRGRGYVPAEEKKKDIEVLGTIPVDSIFSPVQKVVFEVSETRVAQRSDYEKLTLEVWTDGSVSPDDAVAQAAKILKEHLTVFINFEEELEEEDDELDEADEKLKASLSKHVEELELSVRSLNVLRSLEIDFIGDLVKRSEEEMSKSKHYSDQCLQELKGKLSTLGLSFGMRDF</sequence>